<gene>
    <name type="ORF">ORF14</name>
</gene>
<accession>I7H0H9</accession>
<organismHost>
    <name type="scientific">Helicobacter pylori (strain 35A)</name>
    <dbReference type="NCBI Taxonomy" id="585535"/>
</organismHost>
<organismHost>
    <name type="scientific">Helicobacter pylori (strain F16)</name>
    <dbReference type="NCBI Taxonomy" id="866344"/>
</organismHost>
<organismHost>
    <name type="scientific">Helicobacter pylori (strain F30)</name>
    <dbReference type="NCBI Taxonomy" id="866345"/>
</organismHost>
<organismHost>
    <name type="scientific">Helicobacter pylori (strain F32)</name>
    <dbReference type="NCBI Taxonomy" id="102608"/>
</organismHost>
<organismHost>
    <name type="scientific">Helicobacter pylori (strain F57)</name>
    <dbReference type="NCBI Taxonomy" id="866346"/>
</organismHost>
<reference evidence="4" key="1">
    <citation type="journal article" date="2012" name="J. Virol.">
        <title>Complete genome sequences of two Helicobacter pylori bacteriophages isolated from Japanese patients.</title>
        <authorList>
            <person name="Uchiyama J."/>
            <person name="Takeuchi H."/>
            <person name="Kato S."/>
            <person name="Takemura-Uchiyama I."/>
            <person name="Ujihara T."/>
            <person name="Daibata M."/>
            <person name="Matsuzaki S."/>
        </authorList>
    </citation>
    <scope>NUCLEOTIDE SEQUENCE [GENOMIC DNA]</scope>
</reference>
<reference evidence="3" key="2">
    <citation type="journal article" date="2013" name="Appl. Environ. Microbiol.">
        <title>Characterization of Helicobacter pylori bacteriophage KHP30.</title>
        <authorList>
            <person name="Uchiyama J."/>
            <person name="Takeuchi H."/>
            <person name="Kato S."/>
            <person name="Gamoh K."/>
            <person name="Takemura-Uchiyama I."/>
            <person name="Ujihara T."/>
            <person name="Daibata M."/>
            <person name="Matsuzaki S."/>
        </authorList>
    </citation>
    <scope>PROTEIN SEQUENCE OF 1-30</scope>
</reference>
<organism>
    <name type="scientific">Helicobacter pylori bacteriophage KHP30</name>
    <dbReference type="NCBI Taxonomy" id="1208236"/>
    <lineage>
        <taxon>Viruses</taxon>
        <taxon>Duplodnaviria</taxon>
        <taxon>Heunggongvirae</taxon>
        <taxon>Uroviricota</taxon>
        <taxon>Caudoviricetes</taxon>
        <taxon>Schmidvirus</taxon>
        <taxon>Schmidvirus KHP30</taxon>
    </lineage>
</organism>
<feature type="chain" id="PRO_0000420437" description="Major structural protein ORF14">
    <location>
        <begin position="1"/>
        <end position="381"/>
    </location>
</feature>
<feature type="coiled-coil region" evidence="1">
    <location>
        <begin position="287"/>
        <end position="307"/>
    </location>
</feature>
<feature type="strand" evidence="5">
    <location>
        <begin position="22"/>
        <end position="30"/>
    </location>
</feature>
<feature type="turn" evidence="5">
    <location>
        <begin position="36"/>
        <end position="40"/>
    </location>
</feature>
<feature type="strand" evidence="5">
    <location>
        <begin position="41"/>
        <end position="44"/>
    </location>
</feature>
<feature type="strand" evidence="5">
    <location>
        <begin position="48"/>
        <end position="52"/>
    </location>
</feature>
<feature type="strand" evidence="5">
    <location>
        <begin position="60"/>
        <end position="65"/>
    </location>
</feature>
<feature type="helix" evidence="5">
    <location>
        <begin position="79"/>
        <end position="81"/>
    </location>
</feature>
<feature type="strand" evidence="5">
    <location>
        <begin position="88"/>
        <end position="90"/>
    </location>
</feature>
<feature type="strand" evidence="5">
    <location>
        <begin position="96"/>
        <end position="103"/>
    </location>
</feature>
<feature type="helix" evidence="5">
    <location>
        <begin position="107"/>
        <end position="112"/>
    </location>
</feature>
<feature type="helix" evidence="5">
    <location>
        <begin position="117"/>
        <end position="141"/>
    </location>
</feature>
<feature type="strand" evidence="5">
    <location>
        <begin position="146"/>
        <end position="150"/>
    </location>
</feature>
<feature type="helix" evidence="5">
    <location>
        <begin position="156"/>
        <end position="167"/>
    </location>
</feature>
<feature type="strand" evidence="5">
    <location>
        <begin position="183"/>
        <end position="192"/>
    </location>
</feature>
<feature type="strand" evidence="5">
    <location>
        <begin position="194"/>
        <end position="199"/>
    </location>
</feature>
<feature type="strand" evidence="5">
    <location>
        <begin position="201"/>
        <end position="205"/>
    </location>
</feature>
<feature type="helix" evidence="5">
    <location>
        <begin position="206"/>
        <end position="213"/>
    </location>
</feature>
<feature type="helix" evidence="5">
    <location>
        <begin position="216"/>
        <end position="228"/>
    </location>
</feature>
<feature type="turn" evidence="5">
    <location>
        <begin position="235"/>
        <end position="238"/>
    </location>
</feature>
<feature type="strand" evidence="5">
    <location>
        <begin position="246"/>
        <end position="254"/>
    </location>
</feature>
<feature type="strand" evidence="5">
    <location>
        <begin position="256"/>
        <end position="259"/>
    </location>
</feature>
<feature type="helix" evidence="5">
    <location>
        <begin position="268"/>
        <end position="272"/>
    </location>
</feature>
<feature type="strand" evidence="5">
    <location>
        <begin position="277"/>
        <end position="279"/>
    </location>
</feature>
<feature type="helix" evidence="5">
    <location>
        <begin position="286"/>
        <end position="293"/>
    </location>
</feature>
<feature type="strand" evidence="5">
    <location>
        <begin position="308"/>
        <end position="314"/>
    </location>
</feature>
<feature type="strand" evidence="5">
    <location>
        <begin position="319"/>
        <end position="323"/>
    </location>
</feature>
<feature type="strand" evidence="5">
    <location>
        <begin position="328"/>
        <end position="335"/>
    </location>
</feature>
<feature type="turn" evidence="5">
    <location>
        <begin position="336"/>
        <end position="339"/>
    </location>
</feature>
<feature type="strand" evidence="5">
    <location>
        <begin position="340"/>
        <end position="353"/>
    </location>
</feature>
<feature type="strand" evidence="5">
    <location>
        <begin position="357"/>
        <end position="361"/>
    </location>
</feature>
<feature type="turn" evidence="5">
    <location>
        <begin position="365"/>
        <end position="368"/>
    </location>
</feature>
<feature type="strand" evidence="5">
    <location>
        <begin position="371"/>
        <end position="379"/>
    </location>
</feature>
<keyword id="KW-0002">3D-structure</keyword>
<keyword id="KW-0175">Coiled coil</keyword>
<keyword id="KW-0903">Direct protein sequencing</keyword>
<keyword id="KW-1185">Reference proteome</keyword>
<name>ORF14_BPKHP</name>
<dbReference type="EMBL" id="AB647160">
    <property type="protein sequence ID" value="BAM34756.1"/>
    <property type="molecule type" value="Genomic_DNA"/>
</dbReference>
<dbReference type="RefSeq" id="YP_007237634.1">
    <property type="nucleotide sequence ID" value="NC_019928.1"/>
</dbReference>
<dbReference type="PDB" id="7DN2">
    <property type="method" value="EM"/>
    <property type="resolution" value="2.70 A"/>
    <property type="chains" value="a/b/c/d/e/f/g/h/i=1-381"/>
</dbReference>
<dbReference type="PDBsum" id="7DN2"/>
<dbReference type="EMDB" id="EMD-30778"/>
<dbReference type="SMR" id="I7H0H9"/>
<dbReference type="KEGG" id="vg:14297145"/>
<dbReference type="OrthoDB" id="3820at10239"/>
<dbReference type="Proteomes" id="UP000002900">
    <property type="component" value="Genome"/>
</dbReference>
<dbReference type="InterPro" id="IPR025267">
    <property type="entry name" value="ORF017-like"/>
</dbReference>
<dbReference type="Pfam" id="PF13252">
    <property type="entry name" value="Phage_capsid_3"/>
    <property type="match status" value="1"/>
</dbReference>
<proteinExistence type="evidence at protein level"/>
<evidence type="ECO:0000255" key="1"/>
<evidence type="ECO:0000303" key="2">
    <source>
    </source>
</evidence>
<evidence type="ECO:0000305" key="3"/>
<evidence type="ECO:0000312" key="4">
    <source>
        <dbReference type="EMBL" id="BAM34756.1"/>
    </source>
</evidence>
<evidence type="ECO:0007829" key="5">
    <source>
        <dbReference type="PDB" id="7DN2"/>
    </source>
</evidence>
<protein>
    <recommendedName>
        <fullName evidence="2">Major structural protein ORF14</fullName>
    </recommendedName>
</protein>
<sequence length="381" mass="42420">MLEKLNNINFNNISNNLNLGIEVGREIQNASWIKSPFFSITGTGADRGVRLFSVASQQPFRPRIKAQLSGSGVSGNTDFEANYDNLEILSQTIYPDAFGNSLRSKIKAYSELERIDFIKESVDSLTTWMNEERDKRIVASLTNDFTNYLYTQTMNVATIRKAIFHARNGLKGDNSKAFPIKPIRATMQSVGNVMVQNTSYIILLDSYQANQLKADSEFKELRKLYAFAGEDKGMLYSGLLGVIDNCPVIDAGVWNKFNVGMPNSSISDSDFMRYLNKANVSSIVTPRQFKEKLNQEKDEKKRSINKEISIGCLIGASAVLLAGSKETRFYIDETVDAGRKSLVGVDCLLGVSKARYQSTDGVVTPYDNQDYAVIGLVSDME</sequence>